<sequence length="895" mass="100450">MLGIGTLAKKVFGTPNDRKIKATRPLIAKINALEPEFEALSDQGIKDKTEDLRKRALAGESLDDLLPEAFANVREAARRALGLRAFDTQLMGGTFLHQGNISEMKTGEGKTLVATFPAYLNALTGKGVHVVTVNEYLAKRDSEWMSKVFGALGMTTGVIYSNQPEAEKMAAYQCDVTYATNNELGFDYLRDNMKPSLDQVFQKQHNFAIVDEVDSILIDEARTPLIISGPAEDRSELYETIDKLIPTLDEGHYEIDEKTRGVTFTDEGNEFLEESLLKAGLLEEGASLYDPESTTIVHHVNQALRAHKLFQRDKDYIVRDGNVVLIDEFTGRMMPGRRLSEGLHQAIEAKEGTDIQPENTTLASVTFQNYFRLYDKLSGMTGTAMTEAEEFAEIYGLGVVEVPTNRPIARIDEDDKVYRTANEKYAAMIAETKLAHEKGQPVLLGTTSIEKSELLSQLLQQEGIEHNVLNARHHEQEAKIVAEAGRLGAVTIATNMAGRGTDIQLGGNIDLKVMEALEANPDADPAVLRAEEEAKHAEEKQKVLEAGGLYVMASERHESRRIDNQLRGRSGRQGDPGRTSFYLSLEDDLMRIFGSERLDKLLSGLGMKEGEAIIHPWVNKSLERAQAKVEGRNFDMRKNVLKFDDVMNDQRKVVFAQRREIMASDDTHEIVTDMRHEVIDDLIDIYMPPKTYADQWDTQGLQDDVREKLNIDAPVVEWAAEEGVDDEQIRERLVEASDKLMAEKVEAFGQEGMSNIEKQVLLQTIDAKWREHLLTLEHLRSVVGFRGYAQRDPLNEYKNESFQLFESMLDSLRETVTQQLSRVRPLSEEEQREMMMQMAARQGMQRAAAPAAEPVEAPKEGFVEDDPSTWGNPSRNDKCPCGSGKKFKHCHGRLG</sequence>
<name>SECA_RUEST</name>
<protein>
    <recommendedName>
        <fullName evidence="1">Protein translocase subunit SecA</fullName>
        <ecNumber evidence="1">7.4.2.8</ecNumber>
    </recommendedName>
</protein>
<evidence type="ECO:0000255" key="1">
    <source>
        <dbReference type="HAMAP-Rule" id="MF_01382"/>
    </source>
</evidence>
<evidence type="ECO:0000256" key="2">
    <source>
        <dbReference type="SAM" id="MobiDB-lite"/>
    </source>
</evidence>
<reference key="1">
    <citation type="submission" date="2006-05" db="EMBL/GenBank/DDBJ databases">
        <title>Complete sequence of chromosome of Silicibacter sp. TM1040.</title>
        <authorList>
            <consortium name="US DOE Joint Genome Institute"/>
            <person name="Copeland A."/>
            <person name="Lucas S."/>
            <person name="Lapidus A."/>
            <person name="Barry K."/>
            <person name="Detter J.C."/>
            <person name="Glavina del Rio T."/>
            <person name="Hammon N."/>
            <person name="Israni S."/>
            <person name="Dalin E."/>
            <person name="Tice H."/>
            <person name="Pitluck S."/>
            <person name="Brettin T."/>
            <person name="Bruce D."/>
            <person name="Han C."/>
            <person name="Tapia R."/>
            <person name="Goodwin L."/>
            <person name="Thompson L.S."/>
            <person name="Gilna P."/>
            <person name="Schmutz J."/>
            <person name="Larimer F."/>
            <person name="Land M."/>
            <person name="Hauser L."/>
            <person name="Kyrpides N."/>
            <person name="Kim E."/>
            <person name="Belas R."/>
            <person name="Moran M.A."/>
            <person name="Buchan A."/>
            <person name="Gonzalez J.M."/>
            <person name="Schell M.A."/>
            <person name="Sun F."/>
            <person name="Richardson P."/>
        </authorList>
    </citation>
    <scope>NUCLEOTIDE SEQUENCE [LARGE SCALE GENOMIC DNA]</scope>
    <source>
        <strain>TM1040</strain>
    </source>
</reference>
<comment type="function">
    <text evidence="1">Part of the Sec protein translocase complex. Interacts with the SecYEG preprotein conducting channel. Has a central role in coupling the hydrolysis of ATP to the transfer of proteins into and across the cell membrane, serving both as a receptor for the preprotein-SecB complex and as an ATP-driven molecular motor driving the stepwise translocation of polypeptide chains across the membrane.</text>
</comment>
<comment type="catalytic activity">
    <reaction evidence="1">
        <text>ATP + H2O + cellular proteinSide 1 = ADP + phosphate + cellular proteinSide 2.</text>
        <dbReference type="EC" id="7.4.2.8"/>
    </reaction>
</comment>
<comment type="cofactor">
    <cofactor evidence="1">
        <name>Zn(2+)</name>
        <dbReference type="ChEBI" id="CHEBI:29105"/>
    </cofactor>
    <text evidence="1">May bind 1 zinc ion per subunit.</text>
</comment>
<comment type="subunit">
    <text evidence="1">Monomer and homodimer. Part of the essential Sec protein translocation apparatus which comprises SecA, SecYEG and auxiliary proteins SecDF-YajC and YidC.</text>
</comment>
<comment type="subcellular location">
    <subcellularLocation>
        <location evidence="1">Cell inner membrane</location>
        <topology evidence="1">Peripheral membrane protein</topology>
        <orientation evidence="1">Cytoplasmic side</orientation>
    </subcellularLocation>
    <subcellularLocation>
        <location evidence="1">Cytoplasm</location>
    </subcellularLocation>
    <text evidence="1">Distribution is 50-50.</text>
</comment>
<comment type="similarity">
    <text evidence="1">Belongs to the SecA family.</text>
</comment>
<keyword id="KW-0067">ATP-binding</keyword>
<keyword id="KW-0997">Cell inner membrane</keyword>
<keyword id="KW-1003">Cell membrane</keyword>
<keyword id="KW-0963">Cytoplasm</keyword>
<keyword id="KW-0472">Membrane</keyword>
<keyword id="KW-0479">Metal-binding</keyword>
<keyword id="KW-0547">Nucleotide-binding</keyword>
<keyword id="KW-0653">Protein transport</keyword>
<keyword id="KW-1185">Reference proteome</keyword>
<keyword id="KW-1278">Translocase</keyword>
<keyword id="KW-0811">Translocation</keyword>
<keyword id="KW-0813">Transport</keyword>
<keyword id="KW-0862">Zinc</keyword>
<feature type="chain" id="PRO_0000321007" description="Protein translocase subunit SecA">
    <location>
        <begin position="1"/>
        <end position="895"/>
    </location>
</feature>
<feature type="region of interest" description="Disordered" evidence="2">
    <location>
        <begin position="560"/>
        <end position="579"/>
    </location>
</feature>
<feature type="region of interest" description="Disordered" evidence="2">
    <location>
        <begin position="848"/>
        <end position="884"/>
    </location>
</feature>
<feature type="binding site" evidence="1">
    <location>
        <position position="89"/>
    </location>
    <ligand>
        <name>ATP</name>
        <dbReference type="ChEBI" id="CHEBI:30616"/>
    </ligand>
</feature>
<feature type="binding site" evidence="1">
    <location>
        <begin position="107"/>
        <end position="111"/>
    </location>
    <ligand>
        <name>ATP</name>
        <dbReference type="ChEBI" id="CHEBI:30616"/>
    </ligand>
</feature>
<feature type="binding site" evidence="1">
    <location>
        <position position="502"/>
    </location>
    <ligand>
        <name>ATP</name>
        <dbReference type="ChEBI" id="CHEBI:30616"/>
    </ligand>
</feature>
<feature type="binding site" evidence="1">
    <location>
        <position position="879"/>
    </location>
    <ligand>
        <name>Zn(2+)</name>
        <dbReference type="ChEBI" id="CHEBI:29105"/>
    </ligand>
</feature>
<feature type="binding site" evidence="1">
    <location>
        <position position="881"/>
    </location>
    <ligand>
        <name>Zn(2+)</name>
        <dbReference type="ChEBI" id="CHEBI:29105"/>
    </ligand>
</feature>
<feature type="binding site" evidence="1">
    <location>
        <position position="890"/>
    </location>
    <ligand>
        <name>Zn(2+)</name>
        <dbReference type="ChEBI" id="CHEBI:29105"/>
    </ligand>
</feature>
<feature type="binding site" evidence="1">
    <location>
        <position position="891"/>
    </location>
    <ligand>
        <name>Zn(2+)</name>
        <dbReference type="ChEBI" id="CHEBI:29105"/>
    </ligand>
</feature>
<gene>
    <name evidence="1" type="primary">secA</name>
    <name type="ordered locus">TM1040_2917</name>
</gene>
<organism>
    <name type="scientific">Ruegeria sp. (strain TM1040)</name>
    <name type="common">Silicibacter sp.</name>
    <dbReference type="NCBI Taxonomy" id="292414"/>
    <lineage>
        <taxon>Bacteria</taxon>
        <taxon>Pseudomonadati</taxon>
        <taxon>Pseudomonadota</taxon>
        <taxon>Alphaproteobacteria</taxon>
        <taxon>Rhodobacterales</taxon>
        <taxon>Roseobacteraceae</taxon>
        <taxon>Ruegeria</taxon>
    </lineage>
</organism>
<proteinExistence type="inferred from homology"/>
<dbReference type="EC" id="7.4.2.8" evidence="1"/>
<dbReference type="EMBL" id="CP000377">
    <property type="protein sequence ID" value="ABF65649.1"/>
    <property type="molecule type" value="Genomic_DNA"/>
</dbReference>
<dbReference type="RefSeq" id="WP_011540230.1">
    <property type="nucleotide sequence ID" value="NC_008044.1"/>
</dbReference>
<dbReference type="SMR" id="Q1GCG7"/>
<dbReference type="STRING" id="292414.TM1040_2917"/>
<dbReference type="KEGG" id="sit:TM1040_2917"/>
<dbReference type="eggNOG" id="COG0653">
    <property type="taxonomic scope" value="Bacteria"/>
</dbReference>
<dbReference type="HOGENOM" id="CLU_005314_3_0_5"/>
<dbReference type="OrthoDB" id="9805579at2"/>
<dbReference type="Proteomes" id="UP000000636">
    <property type="component" value="Chromosome"/>
</dbReference>
<dbReference type="GO" id="GO:0031522">
    <property type="term" value="C:cell envelope Sec protein transport complex"/>
    <property type="evidence" value="ECO:0007669"/>
    <property type="project" value="TreeGrafter"/>
</dbReference>
<dbReference type="GO" id="GO:0005829">
    <property type="term" value="C:cytosol"/>
    <property type="evidence" value="ECO:0007669"/>
    <property type="project" value="TreeGrafter"/>
</dbReference>
<dbReference type="GO" id="GO:0005886">
    <property type="term" value="C:plasma membrane"/>
    <property type="evidence" value="ECO:0007669"/>
    <property type="project" value="UniProtKB-SubCell"/>
</dbReference>
<dbReference type="GO" id="GO:0005524">
    <property type="term" value="F:ATP binding"/>
    <property type="evidence" value="ECO:0007669"/>
    <property type="project" value="UniProtKB-UniRule"/>
</dbReference>
<dbReference type="GO" id="GO:0046872">
    <property type="term" value="F:metal ion binding"/>
    <property type="evidence" value="ECO:0007669"/>
    <property type="project" value="UniProtKB-KW"/>
</dbReference>
<dbReference type="GO" id="GO:0008564">
    <property type="term" value="F:protein-exporting ATPase activity"/>
    <property type="evidence" value="ECO:0007669"/>
    <property type="project" value="UniProtKB-EC"/>
</dbReference>
<dbReference type="GO" id="GO:0065002">
    <property type="term" value="P:intracellular protein transmembrane transport"/>
    <property type="evidence" value="ECO:0007669"/>
    <property type="project" value="UniProtKB-UniRule"/>
</dbReference>
<dbReference type="GO" id="GO:0017038">
    <property type="term" value="P:protein import"/>
    <property type="evidence" value="ECO:0007669"/>
    <property type="project" value="InterPro"/>
</dbReference>
<dbReference type="GO" id="GO:0006605">
    <property type="term" value="P:protein targeting"/>
    <property type="evidence" value="ECO:0007669"/>
    <property type="project" value="UniProtKB-UniRule"/>
</dbReference>
<dbReference type="GO" id="GO:0043952">
    <property type="term" value="P:protein transport by the Sec complex"/>
    <property type="evidence" value="ECO:0007669"/>
    <property type="project" value="TreeGrafter"/>
</dbReference>
<dbReference type="CDD" id="cd17928">
    <property type="entry name" value="DEXDc_SecA"/>
    <property type="match status" value="1"/>
</dbReference>
<dbReference type="CDD" id="cd18803">
    <property type="entry name" value="SF2_C_secA"/>
    <property type="match status" value="1"/>
</dbReference>
<dbReference type="FunFam" id="3.40.50.300:FF:000113">
    <property type="entry name" value="Preprotein translocase subunit SecA"/>
    <property type="match status" value="1"/>
</dbReference>
<dbReference type="FunFam" id="3.90.1440.10:FF:000001">
    <property type="entry name" value="Preprotein translocase subunit SecA"/>
    <property type="match status" value="1"/>
</dbReference>
<dbReference type="FunFam" id="1.10.3060.10:FF:000003">
    <property type="entry name" value="Protein translocase subunit SecA"/>
    <property type="match status" value="1"/>
</dbReference>
<dbReference type="Gene3D" id="1.10.3060.10">
    <property type="entry name" value="Helical scaffold and wing domains of SecA"/>
    <property type="match status" value="1"/>
</dbReference>
<dbReference type="Gene3D" id="3.40.50.300">
    <property type="entry name" value="P-loop containing nucleotide triphosphate hydrolases"/>
    <property type="match status" value="2"/>
</dbReference>
<dbReference type="Gene3D" id="3.90.1440.10">
    <property type="entry name" value="SecA, preprotein cross-linking domain"/>
    <property type="match status" value="1"/>
</dbReference>
<dbReference type="HAMAP" id="MF_01382">
    <property type="entry name" value="SecA"/>
    <property type="match status" value="1"/>
</dbReference>
<dbReference type="InterPro" id="IPR014001">
    <property type="entry name" value="Helicase_ATP-bd"/>
</dbReference>
<dbReference type="InterPro" id="IPR001650">
    <property type="entry name" value="Helicase_C-like"/>
</dbReference>
<dbReference type="InterPro" id="IPR027417">
    <property type="entry name" value="P-loop_NTPase"/>
</dbReference>
<dbReference type="InterPro" id="IPR004027">
    <property type="entry name" value="SEC_C_motif"/>
</dbReference>
<dbReference type="InterPro" id="IPR000185">
    <property type="entry name" value="SecA"/>
</dbReference>
<dbReference type="InterPro" id="IPR020937">
    <property type="entry name" value="SecA_CS"/>
</dbReference>
<dbReference type="InterPro" id="IPR011115">
    <property type="entry name" value="SecA_DEAD"/>
</dbReference>
<dbReference type="InterPro" id="IPR014018">
    <property type="entry name" value="SecA_motor_DEAD"/>
</dbReference>
<dbReference type="InterPro" id="IPR011130">
    <property type="entry name" value="SecA_preprotein_X-link_dom"/>
</dbReference>
<dbReference type="InterPro" id="IPR044722">
    <property type="entry name" value="SecA_SF2_C"/>
</dbReference>
<dbReference type="InterPro" id="IPR011116">
    <property type="entry name" value="SecA_Wing/Scaffold"/>
</dbReference>
<dbReference type="InterPro" id="IPR036266">
    <property type="entry name" value="SecA_Wing/Scaffold_sf"/>
</dbReference>
<dbReference type="InterPro" id="IPR036670">
    <property type="entry name" value="SecA_X-link_sf"/>
</dbReference>
<dbReference type="NCBIfam" id="NF009538">
    <property type="entry name" value="PRK12904.1"/>
    <property type="match status" value="1"/>
</dbReference>
<dbReference type="NCBIfam" id="TIGR00963">
    <property type="entry name" value="secA"/>
    <property type="match status" value="1"/>
</dbReference>
<dbReference type="PANTHER" id="PTHR30612:SF0">
    <property type="entry name" value="CHLOROPLAST PROTEIN-TRANSPORTING ATPASE"/>
    <property type="match status" value="1"/>
</dbReference>
<dbReference type="PANTHER" id="PTHR30612">
    <property type="entry name" value="SECA INNER MEMBRANE COMPONENT OF SEC PROTEIN SECRETION SYSTEM"/>
    <property type="match status" value="1"/>
</dbReference>
<dbReference type="Pfam" id="PF21090">
    <property type="entry name" value="P-loop_SecA"/>
    <property type="match status" value="1"/>
</dbReference>
<dbReference type="Pfam" id="PF02810">
    <property type="entry name" value="SEC-C"/>
    <property type="match status" value="1"/>
</dbReference>
<dbReference type="Pfam" id="PF07517">
    <property type="entry name" value="SecA_DEAD"/>
    <property type="match status" value="1"/>
</dbReference>
<dbReference type="Pfam" id="PF01043">
    <property type="entry name" value="SecA_PP_bind"/>
    <property type="match status" value="1"/>
</dbReference>
<dbReference type="Pfam" id="PF07516">
    <property type="entry name" value="SecA_SW"/>
    <property type="match status" value="1"/>
</dbReference>
<dbReference type="PRINTS" id="PR00906">
    <property type="entry name" value="SECA"/>
</dbReference>
<dbReference type="SMART" id="SM00957">
    <property type="entry name" value="SecA_DEAD"/>
    <property type="match status" value="1"/>
</dbReference>
<dbReference type="SMART" id="SM00958">
    <property type="entry name" value="SecA_PP_bind"/>
    <property type="match status" value="1"/>
</dbReference>
<dbReference type="SUPFAM" id="SSF81886">
    <property type="entry name" value="Helical scaffold and wing domains of SecA"/>
    <property type="match status" value="1"/>
</dbReference>
<dbReference type="SUPFAM" id="SSF52540">
    <property type="entry name" value="P-loop containing nucleoside triphosphate hydrolases"/>
    <property type="match status" value="2"/>
</dbReference>
<dbReference type="SUPFAM" id="SSF81767">
    <property type="entry name" value="Pre-protein crosslinking domain of SecA"/>
    <property type="match status" value="1"/>
</dbReference>
<dbReference type="PROSITE" id="PS01312">
    <property type="entry name" value="SECA"/>
    <property type="match status" value="1"/>
</dbReference>
<dbReference type="PROSITE" id="PS51196">
    <property type="entry name" value="SECA_MOTOR_DEAD"/>
    <property type="match status" value="1"/>
</dbReference>
<accession>Q1GCG7</accession>